<proteinExistence type="evidence at protein level"/>
<accession>P11448</accession>
<evidence type="ECO:0000255" key="1">
    <source>
        <dbReference type="PROSITE-ProRule" id="PRU00433"/>
    </source>
</evidence>
<evidence type="ECO:0000269" key="2">
    <source>
    </source>
</evidence>
<evidence type="ECO:0000305" key="3"/>
<feature type="chain" id="PRO_0000208672" description="Cytochrome c6">
    <location>
        <begin position="1"/>
        <end position="88"/>
    </location>
</feature>
<feature type="binding site" description="covalent" evidence="1 2">
    <location>
        <position position="15"/>
    </location>
    <ligand>
        <name>heme c</name>
        <dbReference type="ChEBI" id="CHEBI:61717"/>
    </ligand>
</feature>
<feature type="binding site" description="covalent" evidence="1 2">
    <location>
        <position position="18"/>
    </location>
    <ligand>
        <name>heme c</name>
        <dbReference type="ChEBI" id="CHEBI:61717"/>
    </ligand>
</feature>
<feature type="binding site" description="axial binding residue">
    <location>
        <position position="19"/>
    </location>
    <ligand>
        <name>heme c</name>
        <dbReference type="ChEBI" id="CHEBI:61717"/>
    </ligand>
    <ligandPart>
        <name>Fe</name>
        <dbReference type="ChEBI" id="CHEBI:18248"/>
    </ligandPart>
</feature>
<feature type="binding site" description="axial binding residue">
    <location>
        <position position="61"/>
    </location>
    <ligand>
        <name>heme c</name>
        <dbReference type="ChEBI" id="CHEBI:61717"/>
    </ligand>
    <ligandPart>
        <name>Fe</name>
        <dbReference type="ChEBI" id="CHEBI:18248"/>
    </ligandPart>
</feature>
<gene>
    <name type="primary">petJ</name>
</gene>
<name>CYC6_BRYMA</name>
<reference key="1">
    <citation type="journal article" date="1987" name="J. Biochem.">
        <title>Studies on algal cytochromes VI: some properties and amino acid sequence of cytochrome c6 from a green alga, Bryopsis maxima.</title>
        <authorList>
            <person name="Okamoto Y."/>
            <person name="Minami Y."/>
            <person name="Matsubara H."/>
            <person name="Sugimura Y."/>
        </authorList>
    </citation>
    <scope>PROTEIN SEQUENCE</scope>
    <scope>CHARACTERIZATION</scope>
</reference>
<keyword id="KW-0150">Chloroplast</keyword>
<keyword id="KW-0903">Direct protein sequencing</keyword>
<keyword id="KW-0249">Electron transport</keyword>
<keyword id="KW-0349">Heme</keyword>
<keyword id="KW-0408">Iron</keyword>
<keyword id="KW-0479">Metal-binding</keyword>
<keyword id="KW-0602">Photosynthesis</keyword>
<keyword id="KW-0934">Plastid</keyword>
<keyword id="KW-0793">Thylakoid</keyword>
<keyword id="KW-0813">Transport</keyword>
<dbReference type="PIR" id="A30021">
    <property type="entry name" value="CCBM6"/>
</dbReference>
<dbReference type="SMR" id="P11448"/>
<dbReference type="GO" id="GO:0009543">
    <property type="term" value="C:chloroplast thylakoid lumen"/>
    <property type="evidence" value="ECO:0007669"/>
    <property type="project" value="UniProtKB-SubCell"/>
</dbReference>
<dbReference type="GO" id="GO:0009055">
    <property type="term" value="F:electron transfer activity"/>
    <property type="evidence" value="ECO:0007669"/>
    <property type="project" value="InterPro"/>
</dbReference>
<dbReference type="GO" id="GO:0020037">
    <property type="term" value="F:heme binding"/>
    <property type="evidence" value="ECO:0007669"/>
    <property type="project" value="InterPro"/>
</dbReference>
<dbReference type="GO" id="GO:0005506">
    <property type="term" value="F:iron ion binding"/>
    <property type="evidence" value="ECO:0007669"/>
    <property type="project" value="InterPro"/>
</dbReference>
<dbReference type="GO" id="GO:0015979">
    <property type="term" value="P:photosynthesis"/>
    <property type="evidence" value="ECO:0007669"/>
    <property type="project" value="UniProtKB-KW"/>
</dbReference>
<dbReference type="Gene3D" id="1.10.760.10">
    <property type="entry name" value="Cytochrome c-like domain"/>
    <property type="match status" value="1"/>
</dbReference>
<dbReference type="InterPro" id="IPR009056">
    <property type="entry name" value="Cyt_c-like_dom"/>
</dbReference>
<dbReference type="InterPro" id="IPR036909">
    <property type="entry name" value="Cyt_c-like_dom_sf"/>
</dbReference>
<dbReference type="InterPro" id="IPR023655">
    <property type="entry name" value="Cyt_C6"/>
</dbReference>
<dbReference type="InterPro" id="IPR008168">
    <property type="entry name" value="Cyt_C_IC"/>
</dbReference>
<dbReference type="PANTHER" id="PTHR34688">
    <property type="entry name" value="CYTOCHROME C6, CHLOROPLASTIC"/>
    <property type="match status" value="1"/>
</dbReference>
<dbReference type="PANTHER" id="PTHR34688:SF2">
    <property type="entry name" value="CYTOCHROME C6, CHLOROPLASTIC"/>
    <property type="match status" value="1"/>
</dbReference>
<dbReference type="Pfam" id="PF13442">
    <property type="entry name" value="Cytochrome_CBB3"/>
    <property type="match status" value="1"/>
</dbReference>
<dbReference type="PRINTS" id="PR00605">
    <property type="entry name" value="CYTCHROMECIC"/>
</dbReference>
<dbReference type="SUPFAM" id="SSF46626">
    <property type="entry name" value="Cytochrome c"/>
    <property type="match status" value="1"/>
</dbReference>
<dbReference type="PROSITE" id="PS51007">
    <property type="entry name" value="CYTC"/>
    <property type="match status" value="1"/>
</dbReference>
<comment type="function">
    <text>Functions as an electron carrier between membrane-bound cytochrome b6-f and photosystem I in oxygenic photosynthesis.</text>
</comment>
<comment type="biophysicochemical properties">
    <redoxPotential>
        <text>E(0) is +385 mV.</text>
    </redoxPotential>
</comment>
<comment type="subunit">
    <text>Monomer.</text>
</comment>
<comment type="subcellular location">
    <subcellularLocation>
        <location>Plastid</location>
        <location>Chloroplast thylakoid lumen</location>
    </subcellularLocation>
</comment>
<comment type="PTM">
    <text>Binds 1 heme c group covalently per subunit.</text>
</comment>
<comment type="similarity">
    <text evidence="3">Belongs to the cytochrome c family. PetJ subfamily.</text>
</comment>
<protein>
    <recommendedName>
        <fullName>Cytochrome c6</fullName>
    </recommendedName>
    <alternativeName>
        <fullName>Cytochrome c-553</fullName>
    </alternativeName>
    <alternativeName>
        <fullName>Cytochrome c553</fullName>
    </alternativeName>
    <alternativeName>
        <fullName>Soluble cytochrome f</fullName>
    </alternativeName>
</protein>
<sequence length="88" mass="9286">GGDLEIGADVFTGNCAACHAGGANSVEPLKTLNKEDVTKYLDGGLSIEAITSQVRNGKGAMPAWSDRLDDEEIDGVVAYVFKNINEGW</sequence>
<organism>
    <name type="scientific">Bryopsis maxima</name>
    <name type="common">Green alga</name>
    <dbReference type="NCBI Taxonomy" id="3129"/>
    <lineage>
        <taxon>Eukaryota</taxon>
        <taxon>Viridiplantae</taxon>
        <taxon>Chlorophyta</taxon>
        <taxon>Ulvophyceae</taxon>
        <taxon>TCBD clade</taxon>
        <taxon>Bryopsidales</taxon>
        <taxon>Bryopsidineae</taxon>
        <taxon>Bryopsidaceae</taxon>
        <taxon>Bryopsis</taxon>
    </lineage>
</organism>